<protein>
    <recommendedName>
        <fullName evidence="1">Ribonuclease HII</fullName>
        <shortName evidence="1">RNase HII</shortName>
        <ecNumber evidence="1">3.1.26.4</ecNumber>
    </recommendedName>
</protein>
<name>RNH2_BURVG</name>
<reference key="1">
    <citation type="submission" date="2007-03" db="EMBL/GenBank/DDBJ databases">
        <title>Complete sequence of chromosome 1 of Burkholderia vietnamiensis G4.</title>
        <authorList>
            <consortium name="US DOE Joint Genome Institute"/>
            <person name="Copeland A."/>
            <person name="Lucas S."/>
            <person name="Lapidus A."/>
            <person name="Barry K."/>
            <person name="Detter J.C."/>
            <person name="Glavina del Rio T."/>
            <person name="Hammon N."/>
            <person name="Israni S."/>
            <person name="Dalin E."/>
            <person name="Tice H."/>
            <person name="Pitluck S."/>
            <person name="Chain P."/>
            <person name="Malfatti S."/>
            <person name="Shin M."/>
            <person name="Vergez L."/>
            <person name="Schmutz J."/>
            <person name="Larimer F."/>
            <person name="Land M."/>
            <person name="Hauser L."/>
            <person name="Kyrpides N."/>
            <person name="Tiedje J."/>
            <person name="Richardson P."/>
        </authorList>
    </citation>
    <scope>NUCLEOTIDE SEQUENCE [LARGE SCALE GENOMIC DNA]</scope>
    <source>
        <strain>G4 / LMG 22486</strain>
    </source>
</reference>
<keyword id="KW-0963">Cytoplasm</keyword>
<keyword id="KW-0255">Endonuclease</keyword>
<keyword id="KW-0378">Hydrolase</keyword>
<keyword id="KW-0464">Manganese</keyword>
<keyword id="KW-0479">Metal-binding</keyword>
<keyword id="KW-0540">Nuclease</keyword>
<feature type="chain" id="PRO_1000031129" description="Ribonuclease HII">
    <location>
        <begin position="1"/>
        <end position="216"/>
    </location>
</feature>
<feature type="domain" description="RNase H type-2" evidence="2">
    <location>
        <begin position="28"/>
        <end position="216"/>
    </location>
</feature>
<feature type="binding site" evidence="1">
    <location>
        <position position="34"/>
    </location>
    <ligand>
        <name>a divalent metal cation</name>
        <dbReference type="ChEBI" id="CHEBI:60240"/>
    </ligand>
</feature>
<feature type="binding site" evidence="1">
    <location>
        <position position="35"/>
    </location>
    <ligand>
        <name>a divalent metal cation</name>
        <dbReference type="ChEBI" id="CHEBI:60240"/>
    </ligand>
</feature>
<feature type="binding site" evidence="1">
    <location>
        <position position="126"/>
    </location>
    <ligand>
        <name>a divalent metal cation</name>
        <dbReference type="ChEBI" id="CHEBI:60240"/>
    </ligand>
</feature>
<sequence>MTATRAPRAARGRVPLDQRGFDFSRPDDIVCGVDEAGRGPLAGPVVAAAVILDPAQPIEGLDDSKALSAKKRDALYDLIVARSRAYCVASASVDEIDTLNILHATMLAMKRAVEGLSLMPTLAQIDGNRCPTLMVRAEAIVSGDALVPSISAASILAKVTRDRMLVELHARHPVYGFDVHAGYGTAKHLAALREHGPCEAHRRSFAPVRAALDLIR</sequence>
<accession>A4JF61</accession>
<comment type="function">
    <text evidence="1">Endonuclease that specifically degrades the RNA of RNA-DNA hybrids.</text>
</comment>
<comment type="catalytic activity">
    <reaction evidence="1">
        <text>Endonucleolytic cleavage to 5'-phosphomonoester.</text>
        <dbReference type="EC" id="3.1.26.4"/>
    </reaction>
</comment>
<comment type="cofactor">
    <cofactor evidence="1">
        <name>Mn(2+)</name>
        <dbReference type="ChEBI" id="CHEBI:29035"/>
    </cofactor>
    <cofactor evidence="1">
        <name>Mg(2+)</name>
        <dbReference type="ChEBI" id="CHEBI:18420"/>
    </cofactor>
    <text evidence="1">Manganese or magnesium. Binds 1 divalent metal ion per monomer in the absence of substrate. May bind a second metal ion after substrate binding.</text>
</comment>
<comment type="subcellular location">
    <subcellularLocation>
        <location evidence="1">Cytoplasm</location>
    </subcellularLocation>
</comment>
<comment type="similarity">
    <text evidence="1">Belongs to the RNase HII family.</text>
</comment>
<dbReference type="EC" id="3.1.26.4" evidence="1"/>
<dbReference type="EMBL" id="CP000614">
    <property type="protein sequence ID" value="ABO54914.1"/>
    <property type="molecule type" value="Genomic_DNA"/>
</dbReference>
<dbReference type="SMR" id="A4JF61"/>
<dbReference type="KEGG" id="bvi:Bcep1808_1911"/>
<dbReference type="eggNOG" id="COG0164">
    <property type="taxonomic scope" value="Bacteria"/>
</dbReference>
<dbReference type="HOGENOM" id="CLU_036532_3_2_4"/>
<dbReference type="Proteomes" id="UP000002287">
    <property type="component" value="Chromosome 1"/>
</dbReference>
<dbReference type="GO" id="GO:0005737">
    <property type="term" value="C:cytoplasm"/>
    <property type="evidence" value="ECO:0007669"/>
    <property type="project" value="UniProtKB-SubCell"/>
</dbReference>
<dbReference type="GO" id="GO:0032299">
    <property type="term" value="C:ribonuclease H2 complex"/>
    <property type="evidence" value="ECO:0007669"/>
    <property type="project" value="TreeGrafter"/>
</dbReference>
<dbReference type="GO" id="GO:0030145">
    <property type="term" value="F:manganese ion binding"/>
    <property type="evidence" value="ECO:0007669"/>
    <property type="project" value="UniProtKB-UniRule"/>
</dbReference>
<dbReference type="GO" id="GO:0003723">
    <property type="term" value="F:RNA binding"/>
    <property type="evidence" value="ECO:0007669"/>
    <property type="project" value="InterPro"/>
</dbReference>
<dbReference type="GO" id="GO:0004523">
    <property type="term" value="F:RNA-DNA hybrid ribonuclease activity"/>
    <property type="evidence" value="ECO:0007669"/>
    <property type="project" value="UniProtKB-UniRule"/>
</dbReference>
<dbReference type="GO" id="GO:0043137">
    <property type="term" value="P:DNA replication, removal of RNA primer"/>
    <property type="evidence" value="ECO:0007669"/>
    <property type="project" value="TreeGrafter"/>
</dbReference>
<dbReference type="GO" id="GO:0006298">
    <property type="term" value="P:mismatch repair"/>
    <property type="evidence" value="ECO:0007669"/>
    <property type="project" value="TreeGrafter"/>
</dbReference>
<dbReference type="CDD" id="cd07182">
    <property type="entry name" value="RNase_HII_bacteria_HII_like"/>
    <property type="match status" value="1"/>
</dbReference>
<dbReference type="FunFam" id="3.30.420.10:FF:000006">
    <property type="entry name" value="Ribonuclease HII"/>
    <property type="match status" value="1"/>
</dbReference>
<dbReference type="Gene3D" id="3.30.420.10">
    <property type="entry name" value="Ribonuclease H-like superfamily/Ribonuclease H"/>
    <property type="match status" value="1"/>
</dbReference>
<dbReference type="HAMAP" id="MF_00052_B">
    <property type="entry name" value="RNase_HII_B"/>
    <property type="match status" value="1"/>
</dbReference>
<dbReference type="InterPro" id="IPR022898">
    <property type="entry name" value="RNase_HII"/>
</dbReference>
<dbReference type="InterPro" id="IPR001352">
    <property type="entry name" value="RNase_HII/HIII"/>
</dbReference>
<dbReference type="InterPro" id="IPR024567">
    <property type="entry name" value="RNase_HII/HIII_dom"/>
</dbReference>
<dbReference type="InterPro" id="IPR012337">
    <property type="entry name" value="RNaseH-like_sf"/>
</dbReference>
<dbReference type="InterPro" id="IPR036397">
    <property type="entry name" value="RNaseH_sf"/>
</dbReference>
<dbReference type="NCBIfam" id="NF000595">
    <property type="entry name" value="PRK00015.1-3"/>
    <property type="match status" value="1"/>
</dbReference>
<dbReference type="NCBIfam" id="NF000596">
    <property type="entry name" value="PRK00015.1-4"/>
    <property type="match status" value="1"/>
</dbReference>
<dbReference type="PANTHER" id="PTHR10954">
    <property type="entry name" value="RIBONUCLEASE H2 SUBUNIT A"/>
    <property type="match status" value="1"/>
</dbReference>
<dbReference type="PANTHER" id="PTHR10954:SF18">
    <property type="entry name" value="RIBONUCLEASE HII"/>
    <property type="match status" value="1"/>
</dbReference>
<dbReference type="Pfam" id="PF01351">
    <property type="entry name" value="RNase_HII"/>
    <property type="match status" value="1"/>
</dbReference>
<dbReference type="SUPFAM" id="SSF53098">
    <property type="entry name" value="Ribonuclease H-like"/>
    <property type="match status" value="1"/>
</dbReference>
<dbReference type="PROSITE" id="PS51975">
    <property type="entry name" value="RNASE_H_2"/>
    <property type="match status" value="1"/>
</dbReference>
<organism>
    <name type="scientific">Burkholderia vietnamiensis (strain G4 / LMG 22486)</name>
    <name type="common">Burkholderia cepacia (strain R1808)</name>
    <dbReference type="NCBI Taxonomy" id="269482"/>
    <lineage>
        <taxon>Bacteria</taxon>
        <taxon>Pseudomonadati</taxon>
        <taxon>Pseudomonadota</taxon>
        <taxon>Betaproteobacteria</taxon>
        <taxon>Burkholderiales</taxon>
        <taxon>Burkholderiaceae</taxon>
        <taxon>Burkholderia</taxon>
        <taxon>Burkholderia cepacia complex</taxon>
    </lineage>
</organism>
<gene>
    <name evidence="1" type="primary">rnhB</name>
    <name type="ordered locus">Bcep1808_1911</name>
</gene>
<proteinExistence type="inferred from homology"/>
<evidence type="ECO:0000255" key="1">
    <source>
        <dbReference type="HAMAP-Rule" id="MF_00052"/>
    </source>
</evidence>
<evidence type="ECO:0000255" key="2">
    <source>
        <dbReference type="PROSITE-ProRule" id="PRU01319"/>
    </source>
</evidence>